<name>CJ067_HUMAN</name>
<protein>
    <recommendedName>
        <fullName evidence="4">Uncharacterized protein C10orf67, mitochondrial</fullName>
    </recommendedName>
</protein>
<comment type="subunit">
    <text evidence="3">Interacts with NOD2.</text>
</comment>
<comment type="interaction">
    <interactant intactId="EBI-2836278">
        <id>Q8IYJ2</id>
    </interactant>
    <interactant intactId="EBI-7445625">
        <id>Q9HC29</id>
        <label>NOD2</label>
    </interactant>
    <organismsDiffer>false</organismsDiffer>
    <experiments>5</experiments>
</comment>
<comment type="interaction">
    <interactant intactId="EBI-13381098">
        <id>Q8IYJ2-2</id>
    </interactant>
    <interactant intactId="EBI-2876502">
        <id>Q96CM8</id>
        <label>ACSF2</label>
    </interactant>
    <organismsDiffer>false</organismsDiffer>
    <experiments>3</experiments>
</comment>
<comment type="interaction">
    <interactant intactId="EBI-13381098">
        <id>Q8IYJ2-2</id>
    </interactant>
    <interactant intactId="EBI-79934">
        <id>P09917</id>
        <label>ALOX5</label>
    </interactant>
    <organismsDiffer>false</organismsDiffer>
    <experiments>3</experiments>
</comment>
<comment type="interaction">
    <interactant intactId="EBI-13381098">
        <id>Q8IYJ2-2</id>
    </interactant>
    <interactant intactId="EBI-78035">
        <id>Q07817</id>
        <label>BCL2L1</label>
    </interactant>
    <organismsDiffer>false</organismsDiffer>
    <experiments>3</experiments>
</comment>
<comment type="interaction">
    <interactant intactId="EBI-13381098">
        <id>Q8IYJ2-2</id>
    </interactant>
    <interactant intactId="EBI-707714">
        <id>Q92843</id>
        <label>BCL2L2</label>
    </interactant>
    <organismsDiffer>false</organismsDiffer>
    <experiments>3</experiments>
</comment>
<comment type="interaction">
    <interactant intactId="EBI-13381098">
        <id>Q8IYJ2-2</id>
    </interactant>
    <interactant intactId="EBI-721750">
        <id>Q8N138</id>
        <label>ORMDL3</label>
    </interactant>
    <organismsDiffer>false</organismsDiffer>
    <experiments>3</experiments>
</comment>
<comment type="interaction">
    <interactant intactId="EBI-13381098">
        <id>Q8IYJ2-2</id>
    </interactant>
    <interactant intactId="EBI-8652744">
        <id>Q96IW7</id>
        <label>SEC22A</label>
    </interactant>
    <organismsDiffer>false</organismsDiffer>
    <experiments>3</experiments>
</comment>
<comment type="interaction">
    <interactant intactId="EBI-13381098">
        <id>Q8IYJ2-2</id>
    </interactant>
    <interactant intactId="EBI-10238936">
        <id>Q17RD7</id>
        <label>SYT16</label>
    </interactant>
    <organismsDiffer>false</organismsDiffer>
    <experiments>3</experiments>
</comment>
<comment type="interaction">
    <interactant intactId="EBI-13381098">
        <id>Q8IYJ2-2</id>
    </interactant>
    <interactant intactId="EBI-11603430">
        <id>Q6PL24</id>
        <label>TMED8</label>
    </interactant>
    <organismsDiffer>false</organismsDiffer>
    <experiments>3</experiments>
</comment>
<comment type="interaction">
    <interactant intactId="EBI-13381098">
        <id>Q8IYJ2-2</id>
    </interactant>
    <interactant intactId="EBI-8638294">
        <id>Q9NUH8</id>
        <label>TMEM14B</label>
    </interactant>
    <organismsDiffer>false</organismsDiffer>
    <experiments>3</experiments>
</comment>
<comment type="interaction">
    <interactant intactId="EBI-13381098">
        <id>Q8IYJ2-2</id>
    </interactant>
    <interactant intactId="EBI-741829">
        <id>Q96HH6</id>
        <label>TMEM19</label>
    </interactant>
    <organismsDiffer>false</organismsDiffer>
    <experiments>3</experiments>
</comment>
<comment type="interaction">
    <interactant intactId="EBI-13381098">
        <id>Q8IYJ2-2</id>
    </interactant>
    <interactant intactId="EBI-12876824">
        <id>Q9BTX3</id>
        <label>TMEM208</label>
    </interactant>
    <organismsDiffer>false</organismsDiffer>
    <experiments>3</experiments>
</comment>
<comment type="interaction">
    <interactant intactId="EBI-13381098">
        <id>Q8IYJ2-2</id>
    </interactant>
    <interactant intactId="EBI-359977">
        <id>P01375</id>
        <label>TNF</label>
    </interactant>
    <organismsDiffer>false</organismsDiffer>
    <experiments>3</experiments>
</comment>
<comment type="subcellular location">
    <subcellularLocation>
        <location evidence="1">Mitochondrion</location>
    </subcellularLocation>
</comment>
<comment type="alternative products">
    <event type="alternative splicing"/>
    <isoform>
        <id>Q8IYJ2-1</id>
        <name>1</name>
        <sequence type="displayed"/>
    </isoform>
    <isoform>
        <id>Q8IYJ2-2</id>
        <name>2</name>
        <sequence type="described" ref="VSP_058394 VSP_058395"/>
    </isoform>
</comment>
<comment type="caution">
    <text evidence="4">It is uncertain whether Met-1 or Met-2 is the initiator.</text>
</comment>
<comment type="sequence caution" evidence="4">
    <conflict type="erroneous initiation">
        <sequence resource="EMBL-CDS" id="AAH35732"/>
    </conflict>
    <text>Truncated N-terminus.</text>
</comment>
<reference key="1">
    <citation type="journal article" date="2004" name="Nature">
        <title>The DNA sequence and comparative analysis of human chromosome 10.</title>
        <authorList>
            <person name="Deloukas P."/>
            <person name="Earthrowl M.E."/>
            <person name="Grafham D.V."/>
            <person name="Rubenfield M."/>
            <person name="French L."/>
            <person name="Steward C.A."/>
            <person name="Sims S.K."/>
            <person name="Jones M.C."/>
            <person name="Searle S."/>
            <person name="Scott C."/>
            <person name="Howe K."/>
            <person name="Hunt S.E."/>
            <person name="Andrews T.D."/>
            <person name="Gilbert J.G.R."/>
            <person name="Swarbreck D."/>
            <person name="Ashurst J.L."/>
            <person name="Taylor A."/>
            <person name="Battles J."/>
            <person name="Bird C.P."/>
            <person name="Ainscough R."/>
            <person name="Almeida J.P."/>
            <person name="Ashwell R.I.S."/>
            <person name="Ambrose K.D."/>
            <person name="Babbage A.K."/>
            <person name="Bagguley C.L."/>
            <person name="Bailey J."/>
            <person name="Banerjee R."/>
            <person name="Bates K."/>
            <person name="Beasley H."/>
            <person name="Bray-Allen S."/>
            <person name="Brown A.J."/>
            <person name="Brown J.Y."/>
            <person name="Burford D.C."/>
            <person name="Burrill W."/>
            <person name="Burton J."/>
            <person name="Cahill P."/>
            <person name="Camire D."/>
            <person name="Carter N.P."/>
            <person name="Chapman J.C."/>
            <person name="Clark S.Y."/>
            <person name="Clarke G."/>
            <person name="Clee C.M."/>
            <person name="Clegg S."/>
            <person name="Corby N."/>
            <person name="Coulson A."/>
            <person name="Dhami P."/>
            <person name="Dutta I."/>
            <person name="Dunn M."/>
            <person name="Faulkner L."/>
            <person name="Frankish A."/>
            <person name="Frankland J.A."/>
            <person name="Garner P."/>
            <person name="Garnett J."/>
            <person name="Gribble S."/>
            <person name="Griffiths C."/>
            <person name="Grocock R."/>
            <person name="Gustafson E."/>
            <person name="Hammond S."/>
            <person name="Harley J.L."/>
            <person name="Hart E."/>
            <person name="Heath P.D."/>
            <person name="Ho T.P."/>
            <person name="Hopkins B."/>
            <person name="Horne J."/>
            <person name="Howden P.J."/>
            <person name="Huckle E."/>
            <person name="Hynds C."/>
            <person name="Johnson C."/>
            <person name="Johnson D."/>
            <person name="Kana A."/>
            <person name="Kay M."/>
            <person name="Kimberley A.M."/>
            <person name="Kershaw J.K."/>
            <person name="Kokkinaki M."/>
            <person name="Laird G.K."/>
            <person name="Lawlor S."/>
            <person name="Lee H.M."/>
            <person name="Leongamornlert D.A."/>
            <person name="Laird G."/>
            <person name="Lloyd C."/>
            <person name="Lloyd D.M."/>
            <person name="Loveland J."/>
            <person name="Lovell J."/>
            <person name="McLaren S."/>
            <person name="McLay K.E."/>
            <person name="McMurray A."/>
            <person name="Mashreghi-Mohammadi M."/>
            <person name="Matthews L."/>
            <person name="Milne S."/>
            <person name="Nickerson T."/>
            <person name="Nguyen M."/>
            <person name="Overton-Larty E."/>
            <person name="Palmer S.A."/>
            <person name="Pearce A.V."/>
            <person name="Peck A.I."/>
            <person name="Pelan S."/>
            <person name="Phillimore B."/>
            <person name="Porter K."/>
            <person name="Rice C.M."/>
            <person name="Rogosin A."/>
            <person name="Ross M.T."/>
            <person name="Sarafidou T."/>
            <person name="Sehra H.K."/>
            <person name="Shownkeen R."/>
            <person name="Skuce C.D."/>
            <person name="Smith M."/>
            <person name="Standring L."/>
            <person name="Sycamore N."/>
            <person name="Tester J."/>
            <person name="Thorpe A."/>
            <person name="Torcasso W."/>
            <person name="Tracey A."/>
            <person name="Tromans A."/>
            <person name="Tsolas J."/>
            <person name="Wall M."/>
            <person name="Walsh J."/>
            <person name="Wang H."/>
            <person name="Weinstock K."/>
            <person name="West A.P."/>
            <person name="Willey D.L."/>
            <person name="Whitehead S.L."/>
            <person name="Wilming L."/>
            <person name="Wray P.W."/>
            <person name="Young L."/>
            <person name="Chen Y."/>
            <person name="Lovering R.C."/>
            <person name="Moschonas N.K."/>
            <person name="Siebert R."/>
            <person name="Fechtel K."/>
            <person name="Bentley D."/>
            <person name="Durbin R.M."/>
            <person name="Hubbard T."/>
            <person name="Doucette-Stamm L."/>
            <person name="Beck S."/>
            <person name="Smith D.R."/>
            <person name="Rogers J."/>
        </authorList>
    </citation>
    <scope>NUCLEOTIDE SEQUENCE [LARGE SCALE GENOMIC DNA]</scope>
</reference>
<reference key="2">
    <citation type="journal article" date="2004" name="Genome Res.">
        <title>The status, quality, and expansion of the NIH full-length cDNA project: the Mammalian Gene Collection (MGC).</title>
        <authorList>
            <consortium name="The MGC Project Team"/>
        </authorList>
    </citation>
    <scope>NUCLEOTIDE SEQUENCE [LARGE SCALE MRNA] (ISOFORM 2)</scope>
    <source>
        <tissue>Brain</tissue>
    </source>
</reference>
<reference key="3">
    <citation type="journal article" date="2016" name="PLoS ONE">
        <title>Characterization and Genetic Analyses of New Genes Coding for NOD2 Interacting Proteins.</title>
        <authorList>
            <person name="Thiebaut R."/>
            <person name="Esmiol S."/>
            <person name="Lecine P."/>
            <person name="Mahfouz B."/>
            <person name="Hermant A."/>
            <person name="Nicoletti C."/>
            <person name="Parnis S."/>
            <person name="Perroy J."/>
            <person name="Borg J.P."/>
            <person name="Pascoe L."/>
            <person name="Hugot J.P."/>
            <person name="Ollendorff V."/>
        </authorList>
    </citation>
    <scope>INTERACTION WITH NOD2</scope>
</reference>
<dbReference type="EMBL" id="AL139281">
    <property type="status" value="NOT_ANNOTATED_CDS"/>
    <property type="molecule type" value="Genomic_DNA"/>
</dbReference>
<dbReference type="EMBL" id="AL606469">
    <property type="status" value="NOT_ANNOTATED_CDS"/>
    <property type="molecule type" value="Genomic_DNA"/>
</dbReference>
<dbReference type="EMBL" id="AL592296">
    <property type="status" value="NOT_ANNOTATED_CDS"/>
    <property type="molecule type" value="Genomic_DNA"/>
</dbReference>
<dbReference type="EMBL" id="BC035732">
    <property type="protein sequence ID" value="AAH35732.1"/>
    <property type="status" value="ALT_INIT"/>
    <property type="molecule type" value="mRNA"/>
</dbReference>
<dbReference type="CCDS" id="CCDS44365.1">
    <molecule id="Q8IYJ2-2"/>
</dbReference>
<dbReference type="RefSeq" id="NP_001352791.1">
    <molecule id="Q8IYJ2-1"/>
    <property type="nucleotide sequence ID" value="NM_001365862.2"/>
</dbReference>
<dbReference type="RefSeq" id="NP_714925.2">
    <molecule id="Q8IYJ2-2"/>
    <property type="nucleotide sequence ID" value="NM_153714.3"/>
</dbReference>
<dbReference type="RefSeq" id="XP_016871518.1">
    <property type="nucleotide sequence ID" value="XM_017016029.1"/>
</dbReference>
<dbReference type="SMR" id="Q8IYJ2"/>
<dbReference type="BioGRID" id="129180">
    <property type="interactions" value="14"/>
</dbReference>
<dbReference type="FunCoup" id="Q8IYJ2">
    <property type="interactions" value="2"/>
</dbReference>
<dbReference type="IntAct" id="Q8IYJ2">
    <property type="interactions" value="15"/>
</dbReference>
<dbReference type="STRING" id="9606.ENSP00000501139"/>
<dbReference type="GlyGen" id="Q8IYJ2">
    <property type="glycosylation" value="1 site, 1 O-linked glycan (1 site)"/>
</dbReference>
<dbReference type="iPTMnet" id="Q8IYJ2"/>
<dbReference type="PhosphoSitePlus" id="Q8IYJ2"/>
<dbReference type="BioMuta" id="C10orf67"/>
<dbReference type="MassIVE" id="Q8IYJ2"/>
<dbReference type="PaxDb" id="9606-ENSP00000321464"/>
<dbReference type="PeptideAtlas" id="Q8IYJ2"/>
<dbReference type="ProteomicsDB" id="63639"/>
<dbReference type="ProteomicsDB" id="71186"/>
<dbReference type="Antibodypedia" id="51754">
    <property type="antibodies" value="20 antibodies from 12 providers"/>
</dbReference>
<dbReference type="DNASU" id="256815"/>
<dbReference type="Ensembl" id="ENST00000673651.1">
    <molecule id="Q8IYJ2-2"/>
    <property type="protein sequence ID" value="ENSP00000501139.1"/>
    <property type="gene ID" value="ENSG00000179133.15"/>
</dbReference>
<dbReference type="GeneID" id="256815"/>
<dbReference type="KEGG" id="hsa:256815"/>
<dbReference type="UCSC" id="uc010qcx.3">
    <molecule id="Q8IYJ2-1"/>
    <property type="organism name" value="human"/>
</dbReference>
<dbReference type="AGR" id="HGNC:28716"/>
<dbReference type="CTD" id="256815"/>
<dbReference type="DisGeNET" id="256815"/>
<dbReference type="GeneCards" id="C10orf67"/>
<dbReference type="HGNC" id="HGNC:28716">
    <property type="gene designation" value="C10orf67"/>
</dbReference>
<dbReference type="HPA" id="ENSG00000179133">
    <property type="expression patterns" value="Tissue enhanced (choroid plexus, fallopian tube, testis)"/>
</dbReference>
<dbReference type="MalaCards" id="C10orf67"/>
<dbReference type="neXtProt" id="NX_Q8IYJ2"/>
<dbReference type="OpenTargets" id="ENSG00000179133"/>
<dbReference type="PharmGKB" id="PA134915530"/>
<dbReference type="VEuPathDB" id="HostDB:ENSG00000179133"/>
<dbReference type="eggNOG" id="ENOG502S05Y">
    <property type="taxonomic scope" value="Eukaryota"/>
</dbReference>
<dbReference type="GeneTree" id="ENSGT00390000003836"/>
<dbReference type="HOGENOM" id="CLU_1478250_0_0_1"/>
<dbReference type="InParanoid" id="Q8IYJ2"/>
<dbReference type="OrthoDB" id="10027521at2759"/>
<dbReference type="PAN-GO" id="Q8IYJ2">
    <property type="GO annotations" value="0 GO annotations based on evolutionary models"/>
</dbReference>
<dbReference type="TreeFam" id="TF352208"/>
<dbReference type="PathwayCommons" id="Q8IYJ2"/>
<dbReference type="SignaLink" id="Q8IYJ2"/>
<dbReference type="BioGRID-ORCS" id="256815">
    <property type="hits" value="11 hits in 1113 CRISPR screens"/>
</dbReference>
<dbReference type="ChiTaRS" id="C10orf67">
    <property type="organism name" value="human"/>
</dbReference>
<dbReference type="GenomeRNAi" id="256815"/>
<dbReference type="Pharos" id="Q8IYJ2">
    <property type="development level" value="Tdark"/>
</dbReference>
<dbReference type="PRO" id="PR:Q8IYJ2"/>
<dbReference type="Proteomes" id="UP000005640">
    <property type="component" value="Chromosome 10"/>
</dbReference>
<dbReference type="RNAct" id="Q8IYJ2">
    <property type="molecule type" value="protein"/>
</dbReference>
<dbReference type="Bgee" id="ENSG00000179133">
    <property type="expression patterns" value="Expressed in buccal mucosa cell and 105 other cell types or tissues"/>
</dbReference>
<dbReference type="ExpressionAtlas" id="Q8IYJ2">
    <property type="expression patterns" value="baseline and differential"/>
</dbReference>
<dbReference type="GO" id="GO:0005739">
    <property type="term" value="C:mitochondrion"/>
    <property type="evidence" value="ECO:0007669"/>
    <property type="project" value="UniProtKB-SubCell"/>
</dbReference>
<dbReference type="InterPro" id="IPR040119">
    <property type="entry name" value="C10orf67-like"/>
</dbReference>
<dbReference type="InterPro" id="IPR031651">
    <property type="entry name" value="DUF4709"/>
</dbReference>
<dbReference type="InterPro" id="IPR031711">
    <property type="entry name" value="DUF4724"/>
</dbReference>
<dbReference type="PANTHER" id="PTHR22382">
    <property type="entry name" value="RIKEN CDNA 4921504E06 GENE"/>
    <property type="match status" value="1"/>
</dbReference>
<dbReference type="PANTHER" id="PTHR22382:SF7">
    <property type="entry name" value="RIKEN CDNA 4921504E06 GENE"/>
    <property type="match status" value="1"/>
</dbReference>
<dbReference type="Pfam" id="PF15821">
    <property type="entry name" value="DUF4709"/>
    <property type="match status" value="1"/>
</dbReference>
<dbReference type="Pfam" id="PF15852">
    <property type="entry name" value="DUF4724"/>
    <property type="match status" value="1"/>
</dbReference>
<accession>Q8IYJ2</accession>
<accession>A8MUP9</accession>
<accession>Q5QP74</accession>
<accession>Q5SWD4</accession>
<gene>
    <name evidence="5" type="primary">C10orf67</name>
    <name evidence="5" type="synonym">LINC01552</name>
</gene>
<organism>
    <name type="scientific">Homo sapiens</name>
    <name type="common">Human</name>
    <dbReference type="NCBI Taxonomy" id="9606"/>
    <lineage>
        <taxon>Eukaryota</taxon>
        <taxon>Metazoa</taxon>
        <taxon>Chordata</taxon>
        <taxon>Craniata</taxon>
        <taxon>Vertebrata</taxon>
        <taxon>Euteleostomi</taxon>
        <taxon>Mammalia</taxon>
        <taxon>Eutheria</taxon>
        <taxon>Euarchontoglires</taxon>
        <taxon>Primates</taxon>
        <taxon>Haplorrhini</taxon>
        <taxon>Catarrhini</taxon>
        <taxon>Hominidae</taxon>
        <taxon>Homo</taxon>
    </lineage>
</organism>
<sequence length="551" mass="63656">MMALVRDRRAHYVMSIVIRWVHCFSSSLRGTFGTRWEAMKAKATELRVCCARRKREAREFKPPQMRGSTRLNISDDLKIGFFSTDHATQTDSSEILSVKELSSSTQKLAQMMKSLQVDFGFLKQLLQLKFEDRLKEESLSLFTILHDRILEIEKHYQQNEDKMRKSFNQQLADAIAVIKGMYQQFFEVEEENVSLQDASTVKTNILLRKLKEKEEVIKELKEELDQYKDFGFHKMESFAKETSSPKSNLEKENLEYKVENERLLQIISELEEEIQINLKENSGLEDELISMKEMAEKDHKTIQKLMDSRDRLREELHYEKSLVQDVINKQKEDKEMRKKYGSLSVKVARSAKGREASLSPWPKSPPSTTALRPHSATMSVSSAGAQKAKMPKKALKEDQAVVEDKHGLESQIEALKANLENEKKKVERFRKEADRLNKSWEKRFFILRNSFHVLKNEMFTRHTLFRQFAVLADTSFNYIKVKPLLVQSRTTMTAISSSSHCTSSIDGKHVDVVSDQAALQLSPKGKLSESPKEESLEEPSMRQSSPAETVD</sequence>
<evidence type="ECO:0000255" key="1"/>
<evidence type="ECO:0000256" key="2">
    <source>
        <dbReference type="SAM" id="MobiDB-lite"/>
    </source>
</evidence>
<evidence type="ECO:0000269" key="3">
    <source>
    </source>
</evidence>
<evidence type="ECO:0000305" key="4"/>
<evidence type="ECO:0000312" key="5">
    <source>
        <dbReference type="HGNC" id="HGNC:28716"/>
    </source>
</evidence>
<feature type="transit peptide" description="Mitochondrion" evidence="1">
    <location>
        <begin position="1"/>
        <end position="36"/>
    </location>
</feature>
<feature type="chain" id="PRO_0000089800" description="Uncharacterized protein C10orf67, mitochondrial" evidence="1">
    <location>
        <begin position="37"/>
        <end position="551"/>
    </location>
</feature>
<feature type="region of interest" description="Disordered" evidence="2">
    <location>
        <begin position="354"/>
        <end position="389"/>
    </location>
</feature>
<feature type="region of interest" description="Disordered" evidence="2">
    <location>
        <begin position="519"/>
        <end position="551"/>
    </location>
</feature>
<feature type="coiled-coil region" evidence="1">
    <location>
        <begin position="203"/>
        <end position="315"/>
    </location>
</feature>
<feature type="coiled-coil region" evidence="1">
    <location>
        <begin position="405"/>
        <end position="439"/>
    </location>
</feature>
<feature type="compositionally biased region" description="Polar residues" evidence="2">
    <location>
        <begin position="366"/>
        <end position="384"/>
    </location>
</feature>
<feature type="compositionally biased region" description="Polar residues" evidence="2">
    <location>
        <begin position="541"/>
        <end position="551"/>
    </location>
</feature>
<feature type="splice variant" id="VSP_058394" description="In isoform 2.">
    <original>QF</original>
    <variation>PL</variation>
    <location>
        <begin position="184"/>
        <end position="185"/>
    </location>
</feature>
<feature type="splice variant" id="VSP_058395" description="In isoform 2.">
    <location>
        <begin position="186"/>
        <end position="551"/>
    </location>
</feature>
<keyword id="KW-0025">Alternative splicing</keyword>
<keyword id="KW-0175">Coiled coil</keyword>
<keyword id="KW-0496">Mitochondrion</keyword>
<keyword id="KW-1267">Proteomics identification</keyword>
<keyword id="KW-1185">Reference proteome</keyword>
<keyword id="KW-0809">Transit peptide</keyword>
<proteinExistence type="evidence at protein level"/>